<organism>
    <name type="scientific">Rattus norvegicus</name>
    <name type="common">Rat</name>
    <dbReference type="NCBI Taxonomy" id="10116"/>
    <lineage>
        <taxon>Eukaryota</taxon>
        <taxon>Metazoa</taxon>
        <taxon>Chordata</taxon>
        <taxon>Craniata</taxon>
        <taxon>Vertebrata</taxon>
        <taxon>Euteleostomi</taxon>
        <taxon>Mammalia</taxon>
        <taxon>Eutheria</taxon>
        <taxon>Euarchontoglires</taxon>
        <taxon>Glires</taxon>
        <taxon>Rodentia</taxon>
        <taxon>Myomorpha</taxon>
        <taxon>Muroidea</taxon>
        <taxon>Muridae</taxon>
        <taxon>Murinae</taxon>
        <taxon>Rattus</taxon>
    </lineage>
</organism>
<dbReference type="EMBL" id="BC079148">
    <property type="protein sequence ID" value="AAH79148.1"/>
    <property type="molecule type" value="mRNA"/>
</dbReference>
<dbReference type="RefSeq" id="NP_001004268.1">
    <property type="nucleotide sequence ID" value="NM_001004268.1"/>
</dbReference>
<dbReference type="RefSeq" id="XP_006239077.1">
    <property type="nucleotide sequence ID" value="XM_006239015.3"/>
</dbReference>
<dbReference type="RefSeq" id="XP_006239078.1">
    <property type="nucleotide sequence ID" value="XM_006239016.3"/>
</dbReference>
<dbReference type="RefSeq" id="XP_006239079.1">
    <property type="nucleotide sequence ID" value="XM_006239017.5"/>
</dbReference>
<dbReference type="RefSeq" id="XP_006239080.1">
    <property type="nucleotide sequence ID" value="XM_006239018.3"/>
</dbReference>
<dbReference type="RefSeq" id="XP_063143602.1">
    <property type="nucleotide sequence ID" value="XM_063287532.1"/>
</dbReference>
<dbReference type="FunCoup" id="Q6AY88">
    <property type="interactions" value="128"/>
</dbReference>
<dbReference type="STRING" id="10116.ENSRNOP00000070982"/>
<dbReference type="PhosphoSitePlus" id="Q6AY88"/>
<dbReference type="PaxDb" id="10116-ENSRNOP00000039648"/>
<dbReference type="Ensembl" id="ENSRNOT00000081318.2">
    <property type="protein sequence ID" value="ENSRNOP00000070982.1"/>
    <property type="gene ID" value="ENSRNOG00000055933.2"/>
</dbReference>
<dbReference type="GeneID" id="313018"/>
<dbReference type="KEGG" id="rno:313018"/>
<dbReference type="AGR" id="RGD:1303271"/>
<dbReference type="CTD" id="126695"/>
<dbReference type="RGD" id="1303271">
    <property type="gene designation" value="Kdf1"/>
</dbReference>
<dbReference type="eggNOG" id="ENOG502QQ0M">
    <property type="taxonomic scope" value="Eukaryota"/>
</dbReference>
<dbReference type="GeneTree" id="ENSGT00390000016565"/>
<dbReference type="HOGENOM" id="CLU_058054_2_0_1"/>
<dbReference type="InParanoid" id="Q6AY88"/>
<dbReference type="OMA" id="WSKEHNG"/>
<dbReference type="OrthoDB" id="8640515at2759"/>
<dbReference type="PhylomeDB" id="Q6AY88"/>
<dbReference type="TreeFam" id="TF336538"/>
<dbReference type="PRO" id="PR:Q6AY88"/>
<dbReference type="Proteomes" id="UP000002494">
    <property type="component" value="Chromosome 5"/>
</dbReference>
<dbReference type="Bgee" id="ENSRNOG00000055933">
    <property type="expression patterns" value="Expressed in duodenum and 12 other cell types or tissues"/>
</dbReference>
<dbReference type="GO" id="GO:0070161">
    <property type="term" value="C:anchoring junction"/>
    <property type="evidence" value="ECO:0007669"/>
    <property type="project" value="UniProtKB-SubCell"/>
</dbReference>
<dbReference type="GO" id="GO:0005938">
    <property type="term" value="C:cell cortex"/>
    <property type="evidence" value="ECO:0000266"/>
    <property type="project" value="RGD"/>
</dbReference>
<dbReference type="GO" id="GO:0030054">
    <property type="term" value="C:cell junction"/>
    <property type="evidence" value="ECO:0000250"/>
    <property type="project" value="UniProtKB"/>
</dbReference>
<dbReference type="GO" id="GO:0031252">
    <property type="term" value="C:cell leading edge"/>
    <property type="evidence" value="ECO:0000266"/>
    <property type="project" value="RGD"/>
</dbReference>
<dbReference type="GO" id="GO:0005737">
    <property type="term" value="C:cytoplasm"/>
    <property type="evidence" value="ECO:0000250"/>
    <property type="project" value="UniProtKB"/>
</dbReference>
<dbReference type="GO" id="GO:0048589">
    <property type="term" value="P:developmental growth"/>
    <property type="evidence" value="ECO:0000250"/>
    <property type="project" value="UniProtKB"/>
</dbReference>
<dbReference type="GO" id="GO:0061436">
    <property type="term" value="P:establishment of skin barrier"/>
    <property type="evidence" value="ECO:0000250"/>
    <property type="project" value="UniProtKB"/>
</dbReference>
<dbReference type="GO" id="GO:0003334">
    <property type="term" value="P:keratinocyte development"/>
    <property type="evidence" value="ECO:0000266"/>
    <property type="project" value="RGD"/>
</dbReference>
<dbReference type="GO" id="GO:0043616">
    <property type="term" value="P:keratinocyte proliferation"/>
    <property type="evidence" value="ECO:0000266"/>
    <property type="project" value="RGD"/>
</dbReference>
<dbReference type="GO" id="GO:0060887">
    <property type="term" value="P:limb epidermis development"/>
    <property type="evidence" value="ECO:0000250"/>
    <property type="project" value="UniProtKB"/>
</dbReference>
<dbReference type="GO" id="GO:0016331">
    <property type="term" value="P:morphogenesis of embryonic epithelium"/>
    <property type="evidence" value="ECO:0000250"/>
    <property type="project" value="UniProtKB"/>
</dbReference>
<dbReference type="GO" id="GO:0010839">
    <property type="term" value="P:negative regulation of keratinocyte proliferation"/>
    <property type="evidence" value="ECO:0000266"/>
    <property type="project" value="RGD"/>
</dbReference>
<dbReference type="GO" id="GO:2000647">
    <property type="term" value="P:negative regulation of stem cell proliferation"/>
    <property type="evidence" value="ECO:0000250"/>
    <property type="project" value="UniProtKB"/>
</dbReference>
<dbReference type="GO" id="GO:0045606">
    <property type="term" value="P:positive regulation of epidermal cell differentiation"/>
    <property type="evidence" value="ECO:0000250"/>
    <property type="project" value="UniProtKB"/>
</dbReference>
<dbReference type="GO" id="GO:0016579">
    <property type="term" value="P:protein deubiquitination"/>
    <property type="evidence" value="ECO:0007669"/>
    <property type="project" value="Ensembl"/>
</dbReference>
<dbReference type="GO" id="GO:0050821">
    <property type="term" value="P:protein stabilization"/>
    <property type="evidence" value="ECO:0007669"/>
    <property type="project" value="Ensembl"/>
</dbReference>
<dbReference type="GO" id="GO:0010482">
    <property type="term" value="P:regulation of epidermal cell division"/>
    <property type="evidence" value="ECO:0000250"/>
    <property type="project" value="UniProtKB"/>
</dbReference>
<dbReference type="GO" id="GO:0072089">
    <property type="term" value="P:stem cell proliferation"/>
    <property type="evidence" value="ECO:0000266"/>
    <property type="project" value="RGD"/>
</dbReference>
<dbReference type="InterPro" id="IPR028003">
    <property type="entry name" value="KDF1"/>
</dbReference>
<dbReference type="PANTHER" id="PTHR35085">
    <property type="entry name" value="KERATINOCYTE DIFFERENTIATION FACTOR 1"/>
    <property type="match status" value="1"/>
</dbReference>
<dbReference type="PANTHER" id="PTHR35085:SF1">
    <property type="entry name" value="KERATINOCYTE DIFFERENTIATION FACTOR 1"/>
    <property type="match status" value="1"/>
</dbReference>
<dbReference type="Pfam" id="PF15551">
    <property type="entry name" value="DUF4656"/>
    <property type="match status" value="1"/>
</dbReference>
<name>KDF1_RAT</name>
<accession>Q6AY88</accession>
<comment type="function">
    <text evidence="1">Plays a role in the regulation of the epidermis formation during early development. Required both as an inhibitor of basal cell proliferation and a promoter of differentiation of basal progenitor cell progeny (By similarity).</text>
</comment>
<comment type="subcellular location">
    <subcellularLocation>
        <location evidence="1">Cytoplasm</location>
    </subcellularLocation>
    <subcellularLocation>
        <location evidence="1">Cell junction</location>
    </subcellularLocation>
    <text evidence="1">Localized at cell borders in single layered keratinocytes. Localized at cell borders in the basal and spinous layers but is more diffusely localized in the granular layer. Colocalized with actin near the cell membrane, especially in cellular protrusions (By similarity).</text>
</comment>
<proteinExistence type="evidence at transcript level"/>
<sequence length="397" mass="43445">MPRPGQPRPSSGPPRLGPWERPTELCLETNDERSQPPPGRRTRRPDPKDPGHHGPESITFISGSAEPANEPPTCCLLWRPWGWDWCRAAFCFRRCRDCLQRCGACVRSCSPCLSAGDPIEGSSEAAWAKEHNGVPPSPDRAPPSRRDGQKLKTSMGSSFSYPDVKLKGIPVYPYRHATSPVPDADSCCKEPLADPPPTRHSLPSTFTSSPRGSEEYYSFHESDLDLPEMGSGSMSSREIDVLIFKKLTELFSVHQIDELAKCTSDTVFLEKTSKISDLISSITQDYHLDEQDAEGRLVRGIIRISTRKSRSRPQTSEGRSARSTAPAAAPDSGHETMVGSGLSQDELTVQISQETTADAIARKLRPYGAPGYPASQDSSFQGTDTDSSGAPLLQVYC</sequence>
<gene>
    <name type="primary">Kdf1</name>
</gene>
<reference key="1">
    <citation type="journal article" date="2004" name="Genome Res.">
        <title>The status, quality, and expansion of the NIH full-length cDNA project: the Mammalian Gene Collection (MGC).</title>
        <authorList>
            <consortium name="The MGC Project Team"/>
        </authorList>
    </citation>
    <scope>NUCLEOTIDE SEQUENCE [LARGE SCALE MRNA]</scope>
    <source>
        <tissue>Kidney</tissue>
    </source>
</reference>
<keyword id="KW-0965">Cell junction</keyword>
<keyword id="KW-0963">Cytoplasm</keyword>
<keyword id="KW-0217">Developmental protein</keyword>
<keyword id="KW-0221">Differentiation</keyword>
<keyword id="KW-0597">Phosphoprotein</keyword>
<keyword id="KW-1185">Reference proteome</keyword>
<evidence type="ECO:0000250" key="1">
    <source>
        <dbReference type="UniProtKB" id="A2A9F4"/>
    </source>
</evidence>
<evidence type="ECO:0000256" key="2">
    <source>
        <dbReference type="SAM" id="MobiDB-lite"/>
    </source>
</evidence>
<protein>
    <recommendedName>
        <fullName>Keratinocyte differentiation factor 1</fullName>
    </recommendedName>
</protein>
<feature type="chain" id="PRO_0000289050" description="Keratinocyte differentiation factor 1">
    <location>
        <begin position="1"/>
        <end position="397"/>
    </location>
</feature>
<feature type="region of interest" description="Disordered" evidence="2">
    <location>
        <begin position="1"/>
        <end position="67"/>
    </location>
</feature>
<feature type="region of interest" description="Disordered" evidence="2">
    <location>
        <begin position="124"/>
        <end position="158"/>
    </location>
</feature>
<feature type="region of interest" description="Disordered" evidence="2">
    <location>
        <begin position="191"/>
        <end position="214"/>
    </location>
</feature>
<feature type="region of interest" description="Disordered" evidence="2">
    <location>
        <begin position="304"/>
        <end position="339"/>
    </location>
</feature>
<feature type="region of interest" description="Disordered" evidence="2">
    <location>
        <begin position="361"/>
        <end position="392"/>
    </location>
</feature>
<feature type="compositionally biased region" description="Pro residues" evidence="2">
    <location>
        <begin position="1"/>
        <end position="16"/>
    </location>
</feature>
<feature type="compositionally biased region" description="Basic and acidic residues" evidence="2">
    <location>
        <begin position="44"/>
        <end position="55"/>
    </location>
</feature>
<feature type="compositionally biased region" description="Polar residues" evidence="2">
    <location>
        <begin position="201"/>
        <end position="211"/>
    </location>
</feature>
<feature type="compositionally biased region" description="Low complexity" evidence="2">
    <location>
        <begin position="321"/>
        <end position="330"/>
    </location>
</feature>
<feature type="compositionally biased region" description="Polar residues" evidence="2">
    <location>
        <begin position="375"/>
        <end position="388"/>
    </location>
</feature>
<feature type="modified residue" description="Phosphoserine" evidence="1">
    <location>
        <position position="218"/>
    </location>
</feature>